<comment type="function">
    <text evidence="1 5">Receptor for TNFSF8/CD30L. May play a role in the regulation of cellular growth and transformation of activated lymphoblasts (By similarity). Regulates gene expression through activation of NF-kappa-B (PubMed:8982082).</text>
</comment>
<comment type="subunit">
    <text evidence="1">Interacts with TRAF1, TRAF2, TRAF3 and TRAF5.</text>
</comment>
<comment type="subcellular location">
    <subcellularLocation>
        <location evidence="1">Cell membrane</location>
        <topology evidence="2">Single-pass type I membrane protein</topology>
    </subcellularLocation>
</comment>
<comment type="tissue specificity">
    <text evidence="5">Very low level of expression. Detected in spleen, thymus and lung. Highly expressed in HTLV-1 infected T-cell lines.</text>
</comment>
<comment type="induction">
    <text evidence="5">By phytohemagglutinin (PHA) in spleen T-cells.</text>
</comment>
<comment type="similarity">
    <text evidence="6">Belongs to the TNFR8 family.</text>
</comment>
<keyword id="KW-1003">Cell membrane</keyword>
<keyword id="KW-1015">Disulfide bond</keyword>
<keyword id="KW-0325">Glycoprotein</keyword>
<keyword id="KW-0472">Membrane</keyword>
<keyword id="KW-0597">Phosphoprotein</keyword>
<keyword id="KW-0675">Receptor</keyword>
<keyword id="KW-1185">Reference proteome</keyword>
<keyword id="KW-0677">Repeat</keyword>
<keyword id="KW-0732">Signal</keyword>
<keyword id="KW-0812">Transmembrane</keyword>
<keyword id="KW-1133">Transmembrane helix</keyword>
<organism>
    <name type="scientific">Rattus norvegicus</name>
    <name type="common">Rat</name>
    <dbReference type="NCBI Taxonomy" id="10116"/>
    <lineage>
        <taxon>Eukaryota</taxon>
        <taxon>Metazoa</taxon>
        <taxon>Chordata</taxon>
        <taxon>Craniata</taxon>
        <taxon>Vertebrata</taxon>
        <taxon>Euteleostomi</taxon>
        <taxon>Mammalia</taxon>
        <taxon>Eutheria</taxon>
        <taxon>Euarchontoglires</taxon>
        <taxon>Glires</taxon>
        <taxon>Rodentia</taxon>
        <taxon>Myomorpha</taxon>
        <taxon>Muroidea</taxon>
        <taxon>Muridae</taxon>
        <taxon>Murinae</taxon>
        <taxon>Rattus</taxon>
    </lineage>
</organism>
<accession>P97525</accession>
<accession>A0A0G2K7Z6</accession>
<feature type="signal peptide" evidence="2">
    <location>
        <begin position="1"/>
        <end position="18"/>
    </location>
</feature>
<feature type="chain" id="PRO_0000034576" description="Tumor necrosis factor receptor superfamily member 8">
    <location>
        <begin position="19"/>
        <end position="492"/>
    </location>
</feature>
<feature type="topological domain" description="Extracellular" evidence="6">
    <location>
        <begin position="19"/>
        <end position="282"/>
    </location>
</feature>
<feature type="transmembrane region" description="Helical" evidence="2">
    <location>
        <begin position="283"/>
        <end position="303"/>
    </location>
</feature>
<feature type="topological domain" description="Cytoplasmic" evidence="6">
    <location>
        <begin position="304"/>
        <end position="492"/>
    </location>
</feature>
<feature type="repeat" description="TNFR-Cys 1" evidence="3">
    <location>
        <begin position="57"/>
        <end position="104"/>
    </location>
</feature>
<feature type="repeat" description="TNFR-Cys 2" evidence="3">
    <location>
        <begin position="105"/>
        <end position="141"/>
    </location>
</feature>
<feature type="region of interest" description="Disordered" evidence="4">
    <location>
        <begin position="141"/>
        <end position="178"/>
    </location>
</feature>
<feature type="region of interest" description="Disordered" evidence="4">
    <location>
        <begin position="336"/>
        <end position="366"/>
    </location>
</feature>
<feature type="region of interest" description="Disordered" evidence="4">
    <location>
        <begin position="432"/>
        <end position="492"/>
    </location>
</feature>
<feature type="compositionally biased region" description="Low complexity" evidence="4">
    <location>
        <begin position="144"/>
        <end position="155"/>
    </location>
</feature>
<feature type="compositionally biased region" description="Polar residues" evidence="4">
    <location>
        <begin position="160"/>
        <end position="178"/>
    </location>
</feature>
<feature type="compositionally biased region" description="Polar residues" evidence="4">
    <location>
        <begin position="339"/>
        <end position="360"/>
    </location>
</feature>
<feature type="compositionally biased region" description="Basic and acidic residues" evidence="4">
    <location>
        <begin position="450"/>
        <end position="459"/>
    </location>
</feature>
<feature type="compositionally biased region" description="Basic and acidic residues" evidence="4">
    <location>
        <begin position="478"/>
        <end position="492"/>
    </location>
</feature>
<feature type="modified residue" description="Phosphoserine" evidence="1">
    <location>
        <position position="334"/>
    </location>
</feature>
<feature type="modified residue" description="Phosphoserine" evidence="1">
    <location>
        <position position="348"/>
    </location>
</feature>
<feature type="glycosylation site" description="N-linked (GlcNAc...) asparagine" evidence="2">
    <location>
        <position position="151"/>
    </location>
</feature>
<feature type="glycosylation site" description="N-linked (GlcNAc...) asparagine" evidence="2">
    <location>
        <position position="178"/>
    </location>
</feature>
<feature type="glycosylation site" description="N-linked (GlcNAc...) asparagine" evidence="2">
    <location>
        <position position="224"/>
    </location>
</feature>
<feature type="disulfide bond" evidence="3">
    <location>
        <begin position="58"/>
        <end position="80"/>
    </location>
</feature>
<feature type="disulfide bond" evidence="3">
    <location>
        <begin position="83"/>
        <end position="96"/>
    </location>
</feature>
<feature type="disulfide bond" evidence="3">
    <location>
        <begin position="86"/>
        <end position="104"/>
    </location>
</feature>
<feature type="disulfide bond" evidence="3">
    <location>
        <begin position="123"/>
        <end position="141"/>
    </location>
</feature>
<feature type="sequence conflict" description="In Ref. 1; BAA07699." evidence="6" ref="1">
    <original>S</original>
    <variation>N</variation>
    <location>
        <position position="67"/>
    </location>
</feature>
<feature type="sequence conflict" description="In Ref. 1; BAA07699." evidence="6" ref="1">
    <original>NEDR</original>
    <variation>SNEDG</variation>
    <location>
        <begin position="75"/>
        <end position="78"/>
    </location>
</feature>
<feature type="sequence conflict" description="In Ref. 1; BAA07699." evidence="6" ref="1">
    <original>D</original>
    <variation>E</variation>
    <location>
        <position position="142"/>
    </location>
</feature>
<feature type="sequence conflict" description="In Ref. 1; BAA07699." evidence="6" ref="1">
    <original>S</original>
    <variation>T</variation>
    <location>
        <position position="283"/>
    </location>
</feature>
<feature type="sequence conflict" description="In Ref. 1; BAA07699." evidence="6" ref="1">
    <original>R</original>
    <variation>W</variation>
    <location>
        <position position="309"/>
    </location>
</feature>
<feature type="sequence conflict" description="In Ref. 1; BAA07699." evidence="6" ref="1">
    <original>V</original>
    <variation>A</variation>
    <location>
        <position position="422"/>
    </location>
</feature>
<sequence>MSILLKAAGLLFLGMLQAFPKDRPLDTTCTGDLSYYPGEAARNCCYQCPSGLSPTQPCPQGPATARSSVILTTTNEDRKCTACVTCLPGLVEKAPCSGNSPRICECQPGMYCSTPAVNSCARCSEKTVVKFPDTAEKNTICDLPSPGSGPNGSNPDDCKTLTSHTTPQAIPTLESPANDSVRSLLPKQVTDFVNEGATKLVKVPESSSSKASMPSPDPGNAEMNMTLKLPPPGTVPDISTSENSMEPASTASTLSLLVDARTSSRMQPTSPLSTGTPFLDPGSMLFWVAMVVLLVGSASFLLCYWKACRRRFQRKFHLNYLQQTFQPKMEQVDSCPTEKLTQLQRSGSVTDSSAGHTLSPLSPPAVETGASVGTACLETLPLLDDSITGNSFAPREPPEPRVSTEHTNNRIEKIYIMKADTVIVGSVKTEVPEGRAPVGSTESELEAELEVDHTPHYPEQETEPPLGSCTEVMFSVEEGGKEDHEPTTVSEK</sequence>
<evidence type="ECO:0000250" key="1">
    <source>
        <dbReference type="UniProtKB" id="P28908"/>
    </source>
</evidence>
<evidence type="ECO:0000255" key="2"/>
<evidence type="ECO:0000255" key="3">
    <source>
        <dbReference type="PROSITE-ProRule" id="PRU00206"/>
    </source>
</evidence>
<evidence type="ECO:0000256" key="4">
    <source>
        <dbReference type="SAM" id="MobiDB-lite"/>
    </source>
</evidence>
<evidence type="ECO:0000269" key="5">
    <source>
    </source>
</evidence>
<evidence type="ECO:0000305" key="6"/>
<evidence type="ECO:0000312" key="7">
    <source>
        <dbReference type="RGD" id="3879"/>
    </source>
</evidence>
<protein>
    <recommendedName>
        <fullName evidence="1">Tumor necrosis factor receptor superfamily member 8</fullName>
    </recommendedName>
    <alternativeName>
        <fullName>CD30L receptor</fullName>
    </alternativeName>
    <alternativeName>
        <fullName>Lymphocyte activation antigen CD30</fullName>
    </alternativeName>
    <cdAntigenName evidence="1">CD30</cdAntigenName>
</protein>
<name>TNR8_RAT</name>
<reference key="1">
    <citation type="journal article" date="1996" name="Gene">
        <title>Cloning and characterization of a cDNA for rat CD30 homolog and chromosomal assignment of the genomic gene.</title>
        <authorList>
            <person name="Aizawa S."/>
            <person name="Satoh H."/>
            <person name="Horie R."/>
            <person name="Ito K."/>
            <person name="Choi S.H."/>
            <person name="Takeuchi H."/>
            <person name="Watanabe T."/>
        </authorList>
    </citation>
    <scope>NUCLEOTIDE SEQUENCE [MRNA]</scope>
    <scope>FUNCTION</scope>
    <scope>TISSUE SPECIFICITY</scope>
    <scope>INDUCTION</scope>
    <source>
        <strain>WKAH</strain>
        <tissue>T-cell lymphoma</tissue>
    </source>
</reference>
<reference key="2">
    <citation type="journal article" date="2004" name="Nature">
        <title>Genome sequence of the Brown Norway rat yields insights into mammalian evolution.</title>
        <authorList>
            <person name="Gibbs R.A."/>
            <person name="Weinstock G.M."/>
            <person name="Metzker M.L."/>
            <person name="Muzny D.M."/>
            <person name="Sodergren E.J."/>
            <person name="Scherer S."/>
            <person name="Scott G."/>
            <person name="Steffen D."/>
            <person name="Worley K.C."/>
            <person name="Burch P.E."/>
            <person name="Okwuonu G."/>
            <person name="Hines S."/>
            <person name="Lewis L."/>
            <person name="Deramo C."/>
            <person name="Delgado O."/>
            <person name="Dugan-Rocha S."/>
            <person name="Miner G."/>
            <person name="Morgan M."/>
            <person name="Hawes A."/>
            <person name="Gill R."/>
            <person name="Holt R.A."/>
            <person name="Adams M.D."/>
            <person name="Amanatides P.G."/>
            <person name="Baden-Tillson H."/>
            <person name="Barnstead M."/>
            <person name="Chin S."/>
            <person name="Evans C.A."/>
            <person name="Ferriera S."/>
            <person name="Fosler C."/>
            <person name="Glodek A."/>
            <person name="Gu Z."/>
            <person name="Jennings D."/>
            <person name="Kraft C.L."/>
            <person name="Nguyen T."/>
            <person name="Pfannkoch C.M."/>
            <person name="Sitter C."/>
            <person name="Sutton G.G."/>
            <person name="Venter J.C."/>
            <person name="Woodage T."/>
            <person name="Smith D."/>
            <person name="Lee H.-M."/>
            <person name="Gustafson E."/>
            <person name="Cahill P."/>
            <person name="Kana A."/>
            <person name="Doucette-Stamm L."/>
            <person name="Weinstock K."/>
            <person name="Fechtel K."/>
            <person name="Weiss R.B."/>
            <person name="Dunn D.M."/>
            <person name="Green E.D."/>
            <person name="Blakesley R.W."/>
            <person name="Bouffard G.G."/>
            <person name="De Jong P.J."/>
            <person name="Osoegawa K."/>
            <person name="Zhu B."/>
            <person name="Marra M."/>
            <person name="Schein J."/>
            <person name="Bosdet I."/>
            <person name="Fjell C."/>
            <person name="Jones S."/>
            <person name="Krzywinski M."/>
            <person name="Mathewson C."/>
            <person name="Siddiqui A."/>
            <person name="Wye N."/>
            <person name="McPherson J."/>
            <person name="Zhao S."/>
            <person name="Fraser C.M."/>
            <person name="Shetty J."/>
            <person name="Shatsman S."/>
            <person name="Geer K."/>
            <person name="Chen Y."/>
            <person name="Abramzon S."/>
            <person name="Nierman W.C."/>
            <person name="Havlak P.H."/>
            <person name="Chen R."/>
            <person name="Durbin K.J."/>
            <person name="Egan A."/>
            <person name="Ren Y."/>
            <person name="Song X.-Z."/>
            <person name="Li B."/>
            <person name="Liu Y."/>
            <person name="Qin X."/>
            <person name="Cawley S."/>
            <person name="Cooney A.J."/>
            <person name="D'Souza L.M."/>
            <person name="Martin K."/>
            <person name="Wu J.Q."/>
            <person name="Gonzalez-Garay M.L."/>
            <person name="Jackson A.R."/>
            <person name="Kalafus K.J."/>
            <person name="McLeod M.P."/>
            <person name="Milosavljevic A."/>
            <person name="Virk D."/>
            <person name="Volkov A."/>
            <person name="Wheeler D.A."/>
            <person name="Zhang Z."/>
            <person name="Bailey J.A."/>
            <person name="Eichler E.E."/>
            <person name="Tuzun E."/>
            <person name="Birney E."/>
            <person name="Mongin E."/>
            <person name="Ureta-Vidal A."/>
            <person name="Woodwark C."/>
            <person name="Zdobnov E."/>
            <person name="Bork P."/>
            <person name="Suyama M."/>
            <person name="Torrents D."/>
            <person name="Alexandersson M."/>
            <person name="Trask B.J."/>
            <person name="Young J.M."/>
            <person name="Huang H."/>
            <person name="Wang H."/>
            <person name="Xing H."/>
            <person name="Daniels S."/>
            <person name="Gietzen D."/>
            <person name="Schmidt J."/>
            <person name="Stevens K."/>
            <person name="Vitt U."/>
            <person name="Wingrove J."/>
            <person name="Camara F."/>
            <person name="Mar Alba M."/>
            <person name="Abril J.F."/>
            <person name="Guigo R."/>
            <person name="Smit A."/>
            <person name="Dubchak I."/>
            <person name="Rubin E.M."/>
            <person name="Couronne O."/>
            <person name="Poliakov A."/>
            <person name="Huebner N."/>
            <person name="Ganten D."/>
            <person name="Goesele C."/>
            <person name="Hummel O."/>
            <person name="Kreitler T."/>
            <person name="Lee Y.-A."/>
            <person name="Monti J."/>
            <person name="Schulz H."/>
            <person name="Zimdahl H."/>
            <person name="Himmelbauer H."/>
            <person name="Lehrach H."/>
            <person name="Jacob H.J."/>
            <person name="Bromberg S."/>
            <person name="Gullings-Handley J."/>
            <person name="Jensen-Seaman M.I."/>
            <person name="Kwitek A.E."/>
            <person name="Lazar J."/>
            <person name="Pasko D."/>
            <person name="Tonellato P.J."/>
            <person name="Twigger S."/>
            <person name="Ponting C.P."/>
            <person name="Duarte J.M."/>
            <person name="Rice S."/>
            <person name="Goodstadt L."/>
            <person name="Beatson S.A."/>
            <person name="Emes R.D."/>
            <person name="Winter E.E."/>
            <person name="Webber C."/>
            <person name="Brandt P."/>
            <person name="Nyakatura G."/>
            <person name="Adetobi M."/>
            <person name="Chiaromonte F."/>
            <person name="Elnitski L."/>
            <person name="Eswara P."/>
            <person name="Hardison R.C."/>
            <person name="Hou M."/>
            <person name="Kolbe D."/>
            <person name="Makova K."/>
            <person name="Miller W."/>
            <person name="Nekrutenko A."/>
            <person name="Riemer C."/>
            <person name="Schwartz S."/>
            <person name="Taylor J."/>
            <person name="Yang S."/>
            <person name="Zhang Y."/>
            <person name="Lindpaintner K."/>
            <person name="Andrews T.D."/>
            <person name="Caccamo M."/>
            <person name="Clamp M."/>
            <person name="Clarke L."/>
            <person name="Curwen V."/>
            <person name="Durbin R.M."/>
            <person name="Eyras E."/>
            <person name="Searle S.M."/>
            <person name="Cooper G.M."/>
            <person name="Batzoglou S."/>
            <person name="Brudno M."/>
            <person name="Sidow A."/>
            <person name="Stone E.A."/>
            <person name="Payseur B.A."/>
            <person name="Bourque G."/>
            <person name="Lopez-Otin C."/>
            <person name="Puente X.S."/>
            <person name="Chakrabarti K."/>
            <person name="Chatterji S."/>
            <person name="Dewey C."/>
            <person name="Pachter L."/>
            <person name="Bray N."/>
            <person name="Yap V.B."/>
            <person name="Caspi A."/>
            <person name="Tesler G."/>
            <person name="Pevzner P.A."/>
            <person name="Haussler D."/>
            <person name="Roskin K.M."/>
            <person name="Baertsch R."/>
            <person name="Clawson H."/>
            <person name="Furey T.S."/>
            <person name="Hinrichs A.S."/>
            <person name="Karolchik D."/>
            <person name="Kent W.J."/>
            <person name="Rosenbloom K.R."/>
            <person name="Trumbower H."/>
            <person name="Weirauch M."/>
            <person name="Cooper D.N."/>
            <person name="Stenson P.D."/>
            <person name="Ma B."/>
            <person name="Brent M."/>
            <person name="Arumugam M."/>
            <person name="Shteynberg D."/>
            <person name="Copley R.R."/>
            <person name="Taylor M.S."/>
            <person name="Riethman H."/>
            <person name="Mudunuri U."/>
            <person name="Peterson J."/>
            <person name="Guyer M."/>
            <person name="Felsenfeld A."/>
            <person name="Old S."/>
            <person name="Mockrin S."/>
            <person name="Collins F.S."/>
        </authorList>
    </citation>
    <scope>NUCLEOTIDE SEQUENCE [LARGE SCALE GENOMIC DNA]</scope>
    <source>
        <strain>Brown Norway</strain>
    </source>
</reference>
<proteinExistence type="evidence at transcript level"/>
<gene>
    <name evidence="7" type="primary">Tnfrsf8</name>
    <name evidence="1" type="synonym">Cd30</name>
</gene>
<dbReference type="EMBL" id="D42117">
    <property type="protein sequence ID" value="BAA07699.1"/>
    <property type="molecule type" value="mRNA"/>
</dbReference>
<dbReference type="EMBL" id="AC127855">
    <property type="status" value="NOT_ANNOTATED_CDS"/>
    <property type="molecule type" value="Genomic_DNA"/>
</dbReference>
<dbReference type="PIR" id="JC5486">
    <property type="entry name" value="JC5486"/>
</dbReference>
<dbReference type="RefSeq" id="NP_062008.1">
    <property type="nucleotide sequence ID" value="NM_019135.1"/>
</dbReference>
<dbReference type="BioGRID" id="247144">
    <property type="interactions" value="2"/>
</dbReference>
<dbReference type="FunCoup" id="P97525">
    <property type="interactions" value="128"/>
</dbReference>
<dbReference type="STRING" id="10116.ENSRNOP00000074409"/>
<dbReference type="GlyCosmos" id="P97525">
    <property type="glycosylation" value="3 sites, No reported glycans"/>
</dbReference>
<dbReference type="GlyGen" id="P97525">
    <property type="glycosylation" value="3 sites"/>
</dbReference>
<dbReference type="PhosphoSitePlus" id="P97525"/>
<dbReference type="PaxDb" id="10116-ENSRNOP00000022967"/>
<dbReference type="GeneID" id="25069"/>
<dbReference type="KEGG" id="rno:25069"/>
<dbReference type="UCSC" id="RGD:3879">
    <property type="organism name" value="rat"/>
</dbReference>
<dbReference type="AGR" id="RGD:3879"/>
<dbReference type="CTD" id="943"/>
<dbReference type="RGD" id="3879">
    <property type="gene designation" value="Tnfrsf8"/>
</dbReference>
<dbReference type="eggNOG" id="ENOG502SNQ9">
    <property type="taxonomic scope" value="Eukaryota"/>
</dbReference>
<dbReference type="InParanoid" id="P97525"/>
<dbReference type="PhylomeDB" id="P97525"/>
<dbReference type="Reactome" id="R-RNO-5669034">
    <property type="pathway name" value="TNFs bind their physiological receptors"/>
</dbReference>
<dbReference type="PRO" id="PR:P97525"/>
<dbReference type="Proteomes" id="UP000002494">
    <property type="component" value="Chromosome 5"/>
</dbReference>
<dbReference type="Bgee" id="ENSRNOG00000016782">
    <property type="expression patterns" value="Expressed in thymus and 4 other cell types or tissues"/>
</dbReference>
<dbReference type="ExpressionAtlas" id="P97525">
    <property type="expression patterns" value="baseline and differential"/>
</dbReference>
<dbReference type="GO" id="GO:0005886">
    <property type="term" value="C:plasma membrane"/>
    <property type="evidence" value="ECO:0007669"/>
    <property type="project" value="UniProtKB-SubCell"/>
</dbReference>
<dbReference type="GO" id="GO:0002020">
    <property type="term" value="F:protease binding"/>
    <property type="evidence" value="ECO:0000266"/>
    <property type="project" value="RGD"/>
</dbReference>
<dbReference type="GO" id="GO:0004888">
    <property type="term" value="F:transmembrane signaling receptor activity"/>
    <property type="evidence" value="ECO:0007669"/>
    <property type="project" value="InterPro"/>
</dbReference>
<dbReference type="GO" id="GO:0071260">
    <property type="term" value="P:cellular response to mechanical stimulus"/>
    <property type="evidence" value="ECO:0000266"/>
    <property type="project" value="RGD"/>
</dbReference>
<dbReference type="GO" id="GO:0043065">
    <property type="term" value="P:positive regulation of apoptotic process"/>
    <property type="evidence" value="ECO:0000266"/>
    <property type="project" value="RGD"/>
</dbReference>
<dbReference type="GO" id="GO:0032759">
    <property type="term" value="P:positive regulation of TRAIL production"/>
    <property type="evidence" value="ECO:0000266"/>
    <property type="project" value="RGD"/>
</dbReference>
<dbReference type="GO" id="GO:0032760">
    <property type="term" value="P:positive regulation of tumor necrosis factor production"/>
    <property type="evidence" value="ECO:0000266"/>
    <property type="project" value="RGD"/>
</dbReference>
<dbReference type="GO" id="GO:0007165">
    <property type="term" value="P:signal transduction"/>
    <property type="evidence" value="ECO:0007669"/>
    <property type="project" value="InterPro"/>
</dbReference>
<dbReference type="Gene3D" id="2.10.50.10">
    <property type="entry name" value="Tumor Necrosis Factor Receptor, subunit A, domain 2"/>
    <property type="match status" value="1"/>
</dbReference>
<dbReference type="InterPro" id="IPR001368">
    <property type="entry name" value="TNFR/NGFR_Cys_rich_reg"/>
</dbReference>
<dbReference type="InterPro" id="IPR020416">
    <property type="entry name" value="TNFR_8"/>
</dbReference>
<dbReference type="InterPro" id="IPR052862">
    <property type="entry name" value="TNFR_superfamily_member_8"/>
</dbReference>
<dbReference type="PANTHER" id="PTHR47497">
    <property type="entry name" value="TUMOR NECROSIS FACTOR RECEPTOR SUPERFAMILY MEMBER 8"/>
    <property type="match status" value="1"/>
</dbReference>
<dbReference type="PANTHER" id="PTHR47497:SF1">
    <property type="entry name" value="TUMOR NECROSIS FACTOR RECEPTOR SUPERFAMILY MEMBER 8"/>
    <property type="match status" value="1"/>
</dbReference>
<dbReference type="PRINTS" id="PR01923">
    <property type="entry name" value="TNFACTORR8"/>
</dbReference>
<dbReference type="SMART" id="SM00208">
    <property type="entry name" value="TNFR"/>
    <property type="match status" value="3"/>
</dbReference>
<dbReference type="SUPFAM" id="SSF57586">
    <property type="entry name" value="TNF receptor-like"/>
    <property type="match status" value="1"/>
</dbReference>
<dbReference type="PROSITE" id="PS50050">
    <property type="entry name" value="TNFR_NGFR_2"/>
    <property type="match status" value="1"/>
</dbReference>